<feature type="chain" id="PRO_1000016623" description="tRNA uridine 5-carboxymethylaminomethyl modification enzyme MnmG">
    <location>
        <begin position="1"/>
        <end position="629"/>
    </location>
</feature>
<feature type="binding site" evidence="1">
    <location>
        <begin position="11"/>
        <end position="16"/>
    </location>
    <ligand>
        <name>FAD</name>
        <dbReference type="ChEBI" id="CHEBI:57692"/>
    </ligand>
</feature>
<feature type="binding site" evidence="1">
    <location>
        <begin position="273"/>
        <end position="287"/>
    </location>
    <ligand>
        <name>NAD(+)</name>
        <dbReference type="ChEBI" id="CHEBI:57540"/>
    </ligand>
</feature>
<sequence>MKSNYDVIVVGGGHAGVEAALASARLNKKTALINLYEDKIATMPCNPSVGGPAKGIVVREIDALGGEMAKAADATALQTKLLNSSRGPGVWALRVQSDKEEYSKYMRNVIKKQKNLDLITKACTGLVYDDNKSVTGIYLDDEIILNAKAVIITTGTYLKSEILKGIDRYESGPNNEKTTKGISKSLIDLGIKLMRFKTGTPARVYRDSVDLSRAIIEPGTDMKLAFSFSTNTYTPIEKQQPCYLIHSTLETKKIIEDNLEKSAMYSGTVESIGPRYCPSFEDKVVRFKEKDTHQIFIEPETLNGDTWYVQGFSTSMPIEVQELMLKSLPGFENVRVKHWAYAIEYDCIDPMQLSPSLELKDVRNLFTAGQINGTSGYEEAAGQGLIAGINASRKIDGLDPIILRRDEAYIGVMIDDLINKGVWEPYRLLTSRAEHRLLLRNDNAETRLKQYGREIGLISDTEWEQYLIYVKEIEQAIKELKEIRFTPKSQLAINLKNKKQADLSHGYSGYEIIKIPTVDINELIEFIPSLQKLKTNQLQSIVIEIRFEGYVKKERQLVDKLVKLERKKIPLDINYSKVDNLATEAKDKLEKIRPLNIGQASRITGVNPADIQMLLFYLKKQYPLESIDD</sequence>
<proteinExistence type="inferred from homology"/>
<gene>
    <name evidence="1" type="primary">mnmG</name>
    <name evidence="1" type="synonym">gidA</name>
    <name type="ordered locus">MCAP_0856</name>
</gene>
<evidence type="ECO:0000255" key="1">
    <source>
        <dbReference type="HAMAP-Rule" id="MF_00129"/>
    </source>
</evidence>
<comment type="function">
    <text evidence="1">NAD-binding protein involved in the addition of a carboxymethylaminomethyl (cmnm) group at the wobble position (U34) of certain tRNAs, forming tRNA-cmnm(5)s(2)U34.</text>
</comment>
<comment type="cofactor">
    <cofactor evidence="1">
        <name>FAD</name>
        <dbReference type="ChEBI" id="CHEBI:57692"/>
    </cofactor>
</comment>
<comment type="subunit">
    <text evidence="1">Homodimer. Heterotetramer of two MnmE and two MnmG subunits.</text>
</comment>
<comment type="subcellular location">
    <subcellularLocation>
        <location evidence="1">Cytoplasm</location>
    </subcellularLocation>
</comment>
<comment type="similarity">
    <text evidence="1">Belongs to the MnmG family.</text>
</comment>
<organism>
    <name type="scientific">Mycoplasma capricolum subsp. capricolum (strain California kid / ATCC 27343 / NCTC 10154)</name>
    <dbReference type="NCBI Taxonomy" id="340047"/>
    <lineage>
        <taxon>Bacteria</taxon>
        <taxon>Bacillati</taxon>
        <taxon>Mycoplasmatota</taxon>
        <taxon>Mollicutes</taxon>
        <taxon>Mycoplasmataceae</taxon>
        <taxon>Mycoplasma</taxon>
    </lineage>
</organism>
<keyword id="KW-0963">Cytoplasm</keyword>
<keyword id="KW-0274">FAD</keyword>
<keyword id="KW-0285">Flavoprotein</keyword>
<keyword id="KW-0520">NAD</keyword>
<keyword id="KW-0819">tRNA processing</keyword>
<reference key="1">
    <citation type="submission" date="2005-09" db="EMBL/GenBank/DDBJ databases">
        <authorList>
            <person name="Glass J.I."/>
            <person name="Lartigue C."/>
            <person name="Pfannkoch C."/>
            <person name="Baden-Tillson H."/>
            <person name="Smith H.O."/>
            <person name="Venter J.C."/>
            <person name="Roske K."/>
            <person name="Wise K.S."/>
            <person name="Calcutt M.J."/>
            <person name="Nelson W.C."/>
            <person name="Nierman W.C."/>
        </authorList>
    </citation>
    <scope>NUCLEOTIDE SEQUENCE [LARGE SCALE GENOMIC DNA]</scope>
    <source>
        <strain>California kid / ATCC 27343 / NCTC 10154</strain>
    </source>
</reference>
<accession>Q2SR15</accession>
<protein>
    <recommendedName>
        <fullName evidence="1">tRNA uridine 5-carboxymethylaminomethyl modification enzyme MnmG</fullName>
    </recommendedName>
    <alternativeName>
        <fullName evidence="1">Glucose-inhibited division protein A</fullName>
    </alternativeName>
</protein>
<name>MNMG_MYCCT</name>
<dbReference type="EMBL" id="CP000123">
    <property type="protein sequence ID" value="ABC01073.1"/>
    <property type="molecule type" value="Genomic_DNA"/>
</dbReference>
<dbReference type="RefSeq" id="WP_011387682.1">
    <property type="nucleotide sequence ID" value="NC_007633.1"/>
</dbReference>
<dbReference type="SMR" id="Q2SR15"/>
<dbReference type="GeneID" id="23778190"/>
<dbReference type="KEGG" id="mcp:MCAP_0856"/>
<dbReference type="HOGENOM" id="CLU_007831_2_2_14"/>
<dbReference type="PhylomeDB" id="Q2SR15"/>
<dbReference type="Proteomes" id="UP000001928">
    <property type="component" value="Chromosome"/>
</dbReference>
<dbReference type="GO" id="GO:0005829">
    <property type="term" value="C:cytosol"/>
    <property type="evidence" value="ECO:0007669"/>
    <property type="project" value="TreeGrafter"/>
</dbReference>
<dbReference type="GO" id="GO:0050660">
    <property type="term" value="F:flavin adenine dinucleotide binding"/>
    <property type="evidence" value="ECO:0007669"/>
    <property type="project" value="UniProtKB-UniRule"/>
</dbReference>
<dbReference type="GO" id="GO:0030488">
    <property type="term" value="P:tRNA methylation"/>
    <property type="evidence" value="ECO:0007669"/>
    <property type="project" value="TreeGrafter"/>
</dbReference>
<dbReference type="GO" id="GO:0002098">
    <property type="term" value="P:tRNA wobble uridine modification"/>
    <property type="evidence" value="ECO:0007669"/>
    <property type="project" value="InterPro"/>
</dbReference>
<dbReference type="FunFam" id="1.10.150.570:FF:000001">
    <property type="entry name" value="tRNA uridine 5-carboxymethylaminomethyl modification enzyme MnmG"/>
    <property type="match status" value="1"/>
</dbReference>
<dbReference type="FunFam" id="3.50.50.60:FF:000002">
    <property type="entry name" value="tRNA uridine 5-carboxymethylaminomethyl modification enzyme MnmG"/>
    <property type="match status" value="1"/>
</dbReference>
<dbReference type="Gene3D" id="3.50.50.60">
    <property type="entry name" value="FAD/NAD(P)-binding domain"/>
    <property type="match status" value="2"/>
</dbReference>
<dbReference type="Gene3D" id="1.10.150.570">
    <property type="entry name" value="GidA associated domain, C-terminal subdomain"/>
    <property type="match status" value="1"/>
</dbReference>
<dbReference type="Gene3D" id="1.10.10.1800">
    <property type="entry name" value="tRNA uridine 5-carboxymethylaminomethyl modification enzyme MnmG/GidA"/>
    <property type="match status" value="1"/>
</dbReference>
<dbReference type="HAMAP" id="MF_00129">
    <property type="entry name" value="MnmG_GidA"/>
    <property type="match status" value="1"/>
</dbReference>
<dbReference type="InterPro" id="IPR036188">
    <property type="entry name" value="FAD/NAD-bd_sf"/>
</dbReference>
<dbReference type="InterPro" id="IPR049312">
    <property type="entry name" value="GIDA_C_N"/>
</dbReference>
<dbReference type="InterPro" id="IPR004416">
    <property type="entry name" value="MnmG"/>
</dbReference>
<dbReference type="InterPro" id="IPR002218">
    <property type="entry name" value="MnmG-rel"/>
</dbReference>
<dbReference type="InterPro" id="IPR020595">
    <property type="entry name" value="MnmG-rel_CS"/>
</dbReference>
<dbReference type="InterPro" id="IPR026904">
    <property type="entry name" value="MnmG_C"/>
</dbReference>
<dbReference type="InterPro" id="IPR047001">
    <property type="entry name" value="MnmG_C_subdom"/>
</dbReference>
<dbReference type="InterPro" id="IPR044920">
    <property type="entry name" value="MnmG_C_subdom_sf"/>
</dbReference>
<dbReference type="InterPro" id="IPR040131">
    <property type="entry name" value="MnmG_N"/>
</dbReference>
<dbReference type="NCBIfam" id="TIGR00136">
    <property type="entry name" value="mnmG_gidA"/>
    <property type="match status" value="1"/>
</dbReference>
<dbReference type="PANTHER" id="PTHR11806">
    <property type="entry name" value="GLUCOSE INHIBITED DIVISION PROTEIN A"/>
    <property type="match status" value="1"/>
</dbReference>
<dbReference type="PANTHER" id="PTHR11806:SF0">
    <property type="entry name" value="PROTEIN MTO1 HOMOLOG, MITOCHONDRIAL"/>
    <property type="match status" value="1"/>
</dbReference>
<dbReference type="Pfam" id="PF01134">
    <property type="entry name" value="GIDA"/>
    <property type="match status" value="1"/>
</dbReference>
<dbReference type="Pfam" id="PF21680">
    <property type="entry name" value="GIDA_C_1st"/>
    <property type="match status" value="1"/>
</dbReference>
<dbReference type="Pfam" id="PF13932">
    <property type="entry name" value="SAM_GIDA_C"/>
    <property type="match status" value="1"/>
</dbReference>
<dbReference type="PRINTS" id="PR00368">
    <property type="entry name" value="FADPNR"/>
</dbReference>
<dbReference type="PRINTS" id="PR00411">
    <property type="entry name" value="PNDRDTASEI"/>
</dbReference>
<dbReference type="SMART" id="SM01228">
    <property type="entry name" value="GIDA_assoc_3"/>
    <property type="match status" value="1"/>
</dbReference>
<dbReference type="SUPFAM" id="SSF51905">
    <property type="entry name" value="FAD/NAD(P)-binding domain"/>
    <property type="match status" value="1"/>
</dbReference>
<dbReference type="PROSITE" id="PS01280">
    <property type="entry name" value="GIDA_1"/>
    <property type="match status" value="1"/>
</dbReference>
<dbReference type="PROSITE" id="PS01281">
    <property type="entry name" value="GIDA_2"/>
    <property type="match status" value="1"/>
</dbReference>